<protein>
    <recommendedName>
        <fullName>Mediator of RNA polymerase II transcription subunit 12</fullName>
    </recommendedName>
    <alternativeName>
        <fullName>Mediator complex subunit 12</fullName>
    </alternativeName>
    <alternativeName>
        <fullName>Suppressor of RNA polymerase B srb8</fullName>
    </alternativeName>
</protein>
<accession>Q9P6L8</accession>
<name>SRB8_SCHPO</name>
<gene>
    <name type="primary">srb8</name>
    <name type="synonym">med12</name>
    <name type="ORF">SPAC688.08</name>
</gene>
<reference key="1">
    <citation type="journal article" date="2002" name="Nature">
        <title>The genome sequence of Schizosaccharomyces pombe.</title>
        <authorList>
            <person name="Wood V."/>
            <person name="Gwilliam R."/>
            <person name="Rajandream M.A."/>
            <person name="Lyne M.H."/>
            <person name="Lyne R."/>
            <person name="Stewart A."/>
            <person name="Sgouros J.G."/>
            <person name="Peat N."/>
            <person name="Hayles J."/>
            <person name="Baker S.G."/>
            <person name="Basham D."/>
            <person name="Bowman S."/>
            <person name="Brooks K."/>
            <person name="Brown D."/>
            <person name="Brown S."/>
            <person name="Chillingworth T."/>
            <person name="Churcher C.M."/>
            <person name="Collins M."/>
            <person name="Connor R."/>
            <person name="Cronin A."/>
            <person name="Davis P."/>
            <person name="Feltwell T."/>
            <person name="Fraser A."/>
            <person name="Gentles S."/>
            <person name="Goble A."/>
            <person name="Hamlin N."/>
            <person name="Harris D.E."/>
            <person name="Hidalgo J."/>
            <person name="Hodgson G."/>
            <person name="Holroyd S."/>
            <person name="Hornsby T."/>
            <person name="Howarth S."/>
            <person name="Huckle E.J."/>
            <person name="Hunt S."/>
            <person name="Jagels K."/>
            <person name="James K.D."/>
            <person name="Jones L."/>
            <person name="Jones M."/>
            <person name="Leather S."/>
            <person name="McDonald S."/>
            <person name="McLean J."/>
            <person name="Mooney P."/>
            <person name="Moule S."/>
            <person name="Mungall K.L."/>
            <person name="Murphy L.D."/>
            <person name="Niblett D."/>
            <person name="Odell C."/>
            <person name="Oliver K."/>
            <person name="O'Neil S."/>
            <person name="Pearson D."/>
            <person name="Quail M.A."/>
            <person name="Rabbinowitsch E."/>
            <person name="Rutherford K.M."/>
            <person name="Rutter S."/>
            <person name="Saunders D."/>
            <person name="Seeger K."/>
            <person name="Sharp S."/>
            <person name="Skelton J."/>
            <person name="Simmonds M.N."/>
            <person name="Squares R."/>
            <person name="Squares S."/>
            <person name="Stevens K."/>
            <person name="Taylor K."/>
            <person name="Taylor R.G."/>
            <person name="Tivey A."/>
            <person name="Walsh S.V."/>
            <person name="Warren T."/>
            <person name="Whitehead S."/>
            <person name="Woodward J.R."/>
            <person name="Volckaert G."/>
            <person name="Aert R."/>
            <person name="Robben J."/>
            <person name="Grymonprez B."/>
            <person name="Weltjens I."/>
            <person name="Vanstreels E."/>
            <person name="Rieger M."/>
            <person name="Schaefer M."/>
            <person name="Mueller-Auer S."/>
            <person name="Gabel C."/>
            <person name="Fuchs M."/>
            <person name="Duesterhoeft A."/>
            <person name="Fritzc C."/>
            <person name="Holzer E."/>
            <person name="Moestl D."/>
            <person name="Hilbert H."/>
            <person name="Borzym K."/>
            <person name="Langer I."/>
            <person name="Beck A."/>
            <person name="Lehrach H."/>
            <person name="Reinhardt R."/>
            <person name="Pohl T.M."/>
            <person name="Eger P."/>
            <person name="Zimmermann W."/>
            <person name="Wedler H."/>
            <person name="Wambutt R."/>
            <person name="Purnelle B."/>
            <person name="Goffeau A."/>
            <person name="Cadieu E."/>
            <person name="Dreano S."/>
            <person name="Gloux S."/>
            <person name="Lelaure V."/>
            <person name="Mottier S."/>
            <person name="Galibert F."/>
            <person name="Aves S.J."/>
            <person name="Xiang Z."/>
            <person name="Hunt C."/>
            <person name="Moore K."/>
            <person name="Hurst S.M."/>
            <person name="Lucas M."/>
            <person name="Rochet M."/>
            <person name="Gaillardin C."/>
            <person name="Tallada V.A."/>
            <person name="Garzon A."/>
            <person name="Thode G."/>
            <person name="Daga R.R."/>
            <person name="Cruzado L."/>
            <person name="Jimenez J."/>
            <person name="Sanchez M."/>
            <person name="del Rey F."/>
            <person name="Benito J."/>
            <person name="Dominguez A."/>
            <person name="Revuelta J.L."/>
            <person name="Moreno S."/>
            <person name="Armstrong J."/>
            <person name="Forsburg S.L."/>
            <person name="Cerutti L."/>
            <person name="Lowe T."/>
            <person name="McCombie W.R."/>
            <person name="Paulsen I."/>
            <person name="Potashkin J."/>
            <person name="Shpakovski G.V."/>
            <person name="Ussery D."/>
            <person name="Barrell B.G."/>
            <person name="Nurse P."/>
        </authorList>
    </citation>
    <scope>NUCLEOTIDE SEQUENCE [LARGE SCALE GENOMIC DNA]</scope>
    <source>
        <strain>972 / ATCC 24843</strain>
    </source>
</reference>
<reference key="2">
    <citation type="journal article" date="2003" name="Proc. Natl. Acad. Sci. U.S.A.">
        <title>TRAP230/ARC240 and TRAP240/ARC250 Mediator subunits are functionally conserved through evolution.</title>
        <authorList>
            <person name="Samuelsen C.O."/>
            <person name="Baraznenok V."/>
            <person name="Khorosjutina O."/>
            <person name="Spaehr H."/>
            <person name="Kieselbach T."/>
            <person name="Holmberg S."/>
            <person name="Gustafsson C.M."/>
        </authorList>
    </citation>
    <scope>FUNCTION</scope>
    <scope>IDENTIFICATION IN THE MEDIATOR COMPLEX</scope>
</reference>
<reference key="3">
    <citation type="journal article" date="2003" name="J. Biol. Chem.">
        <title>Mediator influences Schizosaccharomyces pombe RNA polymerase II-dependent transcription in vitro.</title>
        <authorList>
            <person name="Spaehr H."/>
            <person name="Khorosjutina O."/>
            <person name="Baraznenok V."/>
            <person name="Linder T."/>
            <person name="Samuelsen C.O."/>
            <person name="Hermand D."/>
            <person name="Maekelae T.P."/>
            <person name="Holmberg S."/>
            <person name="Gustafsson C.M."/>
        </authorList>
    </citation>
    <scope>FUNCTION</scope>
</reference>
<comment type="function">
    <text evidence="1 2">Component of the srb8-11 complex. The srb8-11 complex is a regulatory module of the Mediator complex which is itself involved in regulation of basal and activated RNA polymerase II-dependent transcription. The srb8-11 complex may be involved in the transcriptional repression of a subset of genes regulated by Mediator. It may inhibit the association of the Mediator complex with RNA polymerase II to form the holoenzyme complex.</text>
</comment>
<comment type="subunit">
    <text evidence="1">Component of the srb8-11 complex which consists of rb8, srb9(TRAP240), srb10 and srb11. The srb8-11 complex associates with the Mediator complex thereby blocking association with RNA polymerase II and leading to reduced transcriptional activation by Mediator.</text>
</comment>
<comment type="subcellular location">
    <subcellularLocation>
        <location evidence="3">Nucleus</location>
    </subcellularLocation>
</comment>
<comment type="similarity">
    <text evidence="3">Belongs to the Mediator complex subunit 12 family.</text>
</comment>
<dbReference type="EMBL" id="CU329670">
    <property type="protein sequence ID" value="CAB90774.2"/>
    <property type="molecule type" value="Genomic_DNA"/>
</dbReference>
<dbReference type="RefSeq" id="NP_594066.2">
    <property type="nucleotide sequence ID" value="NM_001019490.2"/>
</dbReference>
<dbReference type="BioGRID" id="279887">
    <property type="interactions" value="4"/>
</dbReference>
<dbReference type="STRING" id="284812.Q9P6L8"/>
<dbReference type="PaxDb" id="4896-SPAC688.08.1"/>
<dbReference type="EnsemblFungi" id="SPAC688.08.1">
    <property type="protein sequence ID" value="SPAC688.08.1:pep"/>
    <property type="gene ID" value="SPAC688.08"/>
</dbReference>
<dbReference type="PomBase" id="SPAC688.08">
    <property type="gene designation" value="srb8"/>
</dbReference>
<dbReference type="VEuPathDB" id="FungiDB:SPAC688.08"/>
<dbReference type="eggNOG" id="KOG4522">
    <property type="taxonomic scope" value="Eukaryota"/>
</dbReference>
<dbReference type="HOGENOM" id="CLU_278636_0_0_1"/>
<dbReference type="InParanoid" id="Q9P6L8"/>
<dbReference type="OMA" id="WFIRCAG"/>
<dbReference type="PRO" id="PR:Q9P6L8"/>
<dbReference type="Proteomes" id="UP000002485">
    <property type="component" value="Chromosome I"/>
</dbReference>
<dbReference type="GO" id="GO:0016592">
    <property type="term" value="C:mediator complex"/>
    <property type="evidence" value="ECO:0000353"/>
    <property type="project" value="PomBase"/>
</dbReference>
<dbReference type="GO" id="GO:0003713">
    <property type="term" value="F:transcription coactivator activity"/>
    <property type="evidence" value="ECO:0000266"/>
    <property type="project" value="PomBase"/>
</dbReference>
<dbReference type="GO" id="GO:0022408">
    <property type="term" value="P:negative regulation of cell-cell adhesion"/>
    <property type="evidence" value="ECO:0000315"/>
    <property type="project" value="PomBase"/>
</dbReference>
<dbReference type="GO" id="GO:0045944">
    <property type="term" value="P:positive regulation of transcription by RNA polymerase II"/>
    <property type="evidence" value="ECO:0000266"/>
    <property type="project" value="PomBase"/>
</dbReference>
<dbReference type="InterPro" id="IPR019035">
    <property type="entry name" value="Mediator_Med12"/>
</dbReference>
<dbReference type="PANTHER" id="PTHR46567">
    <property type="entry name" value="MEDIATOR OF RNA POLYMERASE II TRANSCRIPTION SUBUNIT 12"/>
    <property type="match status" value="1"/>
</dbReference>
<dbReference type="PANTHER" id="PTHR46567:SF1">
    <property type="entry name" value="MEDIATOR OF RNA POLYMERASE II TRANSCRIPTION SUBUNIT 12"/>
    <property type="match status" value="1"/>
</dbReference>
<dbReference type="Pfam" id="PF09497">
    <property type="entry name" value="Med12"/>
    <property type="match status" value="1"/>
</dbReference>
<dbReference type="SMART" id="SM01281">
    <property type="entry name" value="Med12"/>
    <property type="match status" value="1"/>
</dbReference>
<sequence length="1134" mass="131246">MSNRDSANPPGFNDAVPLAICYIDSSTSSHDEYLTLLQSKVSAPDKNFRDETVDGAPFLAGDAISKGHRYSPPVRSDRASAQGLLQQHLEKSSTLENLKRYSSTLLGRQNDAVIDEPFAPFRPPPRVTLSESRRDRWLQGLSDPMVPLSSLIKTIPHGLWGEDILRMLVKFRVPFTRAIWFIRCAGVNEARSFLRKVQTTDITEWVKNWTDVAAGFLISFISSFLNADIYSFADDYTYLLKLFGRLLAEELVSPKHFLLRIVSFSGDSSLKSFSLHFFALQFFSTSLIQYTHICRKCVITILQSYQQLIVDQPANLLKFSLLSKKVSHFLFTLAQKNIESFFFPTEWDKLKPTIILLWKDFPNYSTLLSIMQERNSKAMYMYKPVTSSIRFLQIISCLSFPVGWRTLAKDLFKLLPVYTGVPLLLHWCINCRSIFSGDRNFIVSSIFDNANFDRNLIVDLTLSFVLKLHPLEYNECVAAAQLLDHLAACGYFFFSKYIARLASLGYLRESMLNSSFMDDQRKILVQLPILRMSQQLKNKIYYILSKGNYFVDWSICDEYVKRFKEDHFSFMFKKEENYAIITLSLVKIASTPMSKLYEDYLVMLFAFHYSMFQVMTKLIADNLVHFSFQSCACQTLFFICSVVPKTESQKLLLNEMGKLFQVELNFSYDSPDVNLLIEQFYEITSYESNYDDAFVEYKDATVANRKDFIEFLFHNITVSSKHTAVIFTSDLLMVLKIALNHPPYFDDLATTTFSSLLKRDECTILSFFKILQFYGCKLLSVDQIWAVVSDVYEAQDNNTTLKQFFNYLLDESTWPEGYLEERHWRSILCKEARKHDSGLKLFKLGIKLCTRNEQIMKTIWSFIHVHDCNVISEVIPDQRFLRTLTEHFMIDLRQLDIVTCLKKALVTLDEFSAPLYATWLTTLDDDELSELTDDVVQKKVLESLDNYKSGIWKLVLSGLPNCKTVFEHLLLFSLEERLDLPAAFLQDLIGASAYVMEQVPDSWFLEKLPCPLTQSLQSFSHLSNHIEVLDSTRQSRLTFLCHLILHMHGFVELTDQLATLESLTIRKCIYRNQELLDLLLFSIHLVKPNVETNDEVCNTLKAWENIESRPYTIDFPEALQQYSPRIVLYEPTFW</sequence>
<organism>
    <name type="scientific">Schizosaccharomyces pombe (strain 972 / ATCC 24843)</name>
    <name type="common">Fission yeast</name>
    <dbReference type="NCBI Taxonomy" id="284812"/>
    <lineage>
        <taxon>Eukaryota</taxon>
        <taxon>Fungi</taxon>
        <taxon>Dikarya</taxon>
        <taxon>Ascomycota</taxon>
        <taxon>Taphrinomycotina</taxon>
        <taxon>Schizosaccharomycetes</taxon>
        <taxon>Schizosaccharomycetales</taxon>
        <taxon>Schizosaccharomycetaceae</taxon>
        <taxon>Schizosaccharomyces</taxon>
    </lineage>
</organism>
<proteinExistence type="evidence at protein level"/>
<feature type="chain" id="PRO_0000072182" description="Mediator of RNA polymerase II transcription subunit 12">
    <location>
        <begin position="1"/>
        <end position="1134"/>
    </location>
</feature>
<evidence type="ECO:0000269" key="1">
    <source>
    </source>
</evidence>
<evidence type="ECO:0000269" key="2">
    <source>
    </source>
</evidence>
<evidence type="ECO:0000305" key="3"/>
<keyword id="KW-0010">Activator</keyword>
<keyword id="KW-0539">Nucleus</keyword>
<keyword id="KW-1185">Reference proteome</keyword>
<keyword id="KW-0678">Repressor</keyword>
<keyword id="KW-0804">Transcription</keyword>
<keyword id="KW-0805">Transcription regulation</keyword>